<feature type="chain" id="PRO_0000456832" description="Plakophilin-2">
    <location>
        <begin position="1"/>
        <end position="814"/>
    </location>
</feature>
<feature type="repeat" description="ARM 1" evidence="3">
    <location>
        <begin position="200"/>
        <end position="240"/>
    </location>
</feature>
<feature type="repeat" description="ARM 2" evidence="3">
    <location>
        <begin position="309"/>
        <end position="352"/>
    </location>
</feature>
<feature type="repeat" description="ARM 3" evidence="3">
    <location>
        <begin position="354"/>
        <end position="393"/>
    </location>
</feature>
<feature type="repeat" description="ARM 4" evidence="3">
    <location>
        <begin position="503"/>
        <end position="549"/>
    </location>
</feature>
<feature type="repeat" description="ARM 5" evidence="3">
    <location>
        <begin position="604"/>
        <end position="644"/>
    </location>
</feature>
<feature type="repeat" description="ARM 6" evidence="3">
    <location>
        <begin position="652"/>
        <end position="691"/>
    </location>
</feature>
<feature type="repeat" description="ARM 7" evidence="3">
    <location>
        <begin position="696"/>
        <end position="737"/>
    </location>
</feature>
<feature type="repeat" description="ARM 8" evidence="3">
    <location>
        <begin position="740"/>
        <end position="782"/>
    </location>
</feature>
<feature type="region of interest" description="Required for binding to single-stranded DNA" evidence="1">
    <location>
        <begin position="1"/>
        <end position="329"/>
    </location>
</feature>
<feature type="modified residue" description="Phosphoserine" evidence="1">
    <location>
        <position position="44"/>
    </location>
</feature>
<feature type="modified residue" description="Omega-N-methylarginine" evidence="1">
    <location>
        <position position="46"/>
    </location>
</feature>
<feature type="modified residue" description="Phosphoserine" evidence="1">
    <location>
        <position position="82"/>
    </location>
</feature>
<feature type="modified residue" description="Phosphoserine" evidence="1">
    <location>
        <position position="130"/>
    </location>
</feature>
<feature type="splice variant" id="VSP_061687" description="In isoform 2.">
    <original>VGLSGWRDGSTLKVPCTSIKPHREKKTWIEALREGLEHTTDHTDCPAHYVYSHYYFNSKKSNILVFQHIKDKSLQRNAIILLSPEHCTCQHVRLIPSSVLPSLFNQLQLSPELYFSNMGTLYMTSIKGTLCIQLLKGKLPAKHQANFVTMAERRVYTLLLSSTTSSETSFRRTGDTLPSVTSGQSRVHGLHFHHVICDCLSR</original>
    <variation>AGVTATYGSRWGRGTAQYSSQKSVEERSWRQPLRRLEISPDSSPERAHYGHSEYQYAWRSHVVPGGRLTLPRYARSEILGLRQTGTARRAPGCGSVSDAVFDNGPLNPTIPTHPPGTSHSAGSLLEETTVRVSQARFQGLQSRAGRSSWPRSSVHSTLRESGRMLPTAGQAAVGSGDAHRDRSAFADSQLG</variation>
    <location>
        <begin position="113"/>
        <end position="314"/>
    </location>
</feature>
<feature type="splice variant" id="VSP_061688" description="In isoform 2.">
    <original>KVTVVLGKVNITKREGGGQAAGYMKETWKLANKNPVFL</original>
    <variation>KLEVAELNGVPRLLQVLKQTRDLETKKQIT</variation>
    <location>
        <begin position="399"/>
        <end position="436"/>
    </location>
</feature>
<sequence length="814" mass="90740">MAIPGSLGECGYIRTVLGQQILGHLDSSSLALPSEARLRLAGSSGRGDPVARSQRIQEQVQQTLARRGRSSVVGGNLHRTSSVPEYVYKLHLVENDFVGRQSPAARDYDMLKVGLSGWRDGSTLKVPCTSIKPHREKKTWIEALREGLEHTTDHTDCPAHYVYSHYYFNSKKSNILVFQHIKDKSLQRNAIILLSPEHCTCQHVRLIPSSVLPSLFNQLQLSPELYFSNMGTLYMTSIKGTLCIQLLKGKLPAKHQANFVTMAERRVYTLLLSSTTSSETSFRRTGDTLPSVTSGQSRVHGLHFHHVICDCLSRNADLEMTLERAVNMLDADHVPLSKISAAATFIQHESFQKSEARKRVNQLQGIPKLLQLLKVQNEDVQRAVCGALRNLVFEDNDNKVTVVLGKVNITKREGGGQAAGYMKETWKLANKNPVFLGLLWNLSSSDKLKHLMITEALLTLTESVIIPFSGWPEGDYPKANGLLDFDIFYNVTGCLRNMSSAGPDGRKVMRRCDGLIDSLVHYVRGTIADYQPDDKATENCVCILHNLSYQLEAELPEKYSQSIYMQNRNIQTNSNKSIGCFGSRSRKVKEQYQDTPMPEERSSPRGIEWLWHSIVIRMYLSLIAKSSRNYTQEASLGALQNLTAGSGPIPTSVARMVVQKENGLQHTRKMLHVGDPSVKKTAVSLLRNLSRNLSLQNEIAKETLPDLVSIIPDTVPSTDLLIETTASACYTLNNLMQNSYQNARDLLNTGGLQKIMTISIGEGYAPNKASKAASVLLYSLWAHTELHNAYKKAQFKKTDFVNSRTAKASHSLKD</sequence>
<gene>
    <name evidence="10" type="primary">Pkp2</name>
</gene>
<proteinExistence type="evidence at protein level"/>
<comment type="function">
    <text evidence="1 2 4 5 6">A component of desmosome cell-cell junctions which are required for positive regulation of cellular adhesion (PubMed:21617128). Regulates focal adhesion turnover resulting in changes in focal adhesion size, cell adhesion and cell spreading, potentially via transcriptional modulation of beta-integrins (By similarity). Required to maintain gingival epithelial barrier function (By similarity). Important component of the desmosome that is also required for localization of desmosome component proteins such as DSC2, DSG2 and JUP to the desmosome cell-cell junction (By similarity). Required for the formation of desmosome cell junctions in cardiomyocytes, thereby required for the correct formation of the heart, specifically trabeculation and formation of the atria walls (PubMed:21617128). Loss of desmosome cell junctions leads to mis-localization of DSP and DSG2 resulting in disruption of cell-cell adhesion and disordered intermediate filaments (By similarity). Modulates profibrotic gene expression in cardiomyocytes via regulation of DSP expression and subsequent activation of downstream TGFB1 and MAPK14/p38 MAPK signaling (PubMed:26858265). Required for cardiac sodium current propagation and electrical synchrony in cardiac myocytes, via ANK3 stabilization and modulation of SCN5A/Nav1.5 localization to cell-cell junctions (PubMed:19661460, PubMed:21617128). Required for mitochondrial function, nuclear envelope integrity and positive regulation of SIRT3 transcription via maintaining DES localization at its nuclear envelope and cell tip anchoring points, and thereby preserving regulation of the transcriptional program (By similarity). Maintenance of nuclear envelope integrity protects against DNA damage and transcriptional dysregulation of genes, especially those involved in the electron transport chain, thereby preserving mitochondrial function and protecting against superoxide radical anion generation (By similarity). Binds single-stranded DNA (ssDNA) (By similarity). May regulate the localization of GJA1 to gap junctions in intercalated disks of the heart (By similarity).</text>
</comment>
<comment type="subunit">
    <text evidence="1 4 5">Interacts with DSC2 (By similarity). Interacts with JUP (By similarity). Interacts with KRT5/CK5, KRT8/CK8, KRT14/CK14, KRT18/CK18 and VIM (By similarity). Interacts (via N-terminus) with MARK3/C-TAK1 (By similarity). Interacts with DSP (By similarity). Interacts with DSG1, DSG2 and DSG3 (By similarity). Interacts (via N-terminus) with CTNNB1 (By similarity). Interacts with CDH1 (By similarity). Interacts with the RNA polymerase III (Pol III) complex proteins POLR3A/RPC155, POLR3F/RPC39 and POLR3C/RPC82 (By similarity). Interacts with CTNNA3 (By similarity). Interacts (via N-terminus) with SCN5A/Nav1.5 (PubMed:19661460). Interacts with ANK3/ANKG and GJA1/CX43 (PubMed:21617128).</text>
</comment>
<comment type="interaction">
    <interactant intactId="EBI-6900770">
        <id>F1M7L9</id>
    </interactant>
    <interactant intactId="EBI-6900677">
        <id>Q02487-1</id>
        <label>DSC2</label>
    </interactant>
    <organismsDiffer>true</organismsDiffer>
    <experiments>2</experiments>
</comment>
<comment type="subcellular location">
    <subcellularLocation>
        <location evidence="1">Nucleus</location>
    </subcellularLocation>
    <subcellularLocation>
        <location evidence="5">Cell junction</location>
        <location evidence="5">Desmosome</location>
    </subcellularLocation>
    <subcellularLocation>
        <location evidence="4 6">Cell junction</location>
    </subcellularLocation>
    <subcellularLocation>
        <location evidence="1">Cytoplasm</location>
    </subcellularLocation>
    <text evidence="4">Colocalizes with CTNNA3 and SCN5A/Nav1.5 at intercalated disks in the heart.</text>
</comment>
<comment type="alternative products">
    <event type="alternative splicing"/>
    <isoform>
        <id>F1M7L9-1</id>
        <name>1</name>
        <sequence type="displayed"/>
    </isoform>
    <isoform>
        <id>F1M7L9-2</id>
        <name>2</name>
        <sequence type="described" ref="VSP_061687 VSP_061688"/>
    </isoform>
</comment>
<comment type="tissue specificity">
    <text evidence="4 5">Expressed in the heart (at protein level).</text>
</comment>
<comment type="similarity">
    <text evidence="7">Belongs to the beta-catenin family.</text>
</comment>
<accession>F1M7L9</accession>
<accession>A0A8I6A597</accession>
<evidence type="ECO:0000250" key="1">
    <source>
        <dbReference type="UniProtKB" id="Q99959"/>
    </source>
</evidence>
<evidence type="ECO:0000250" key="2">
    <source>
        <dbReference type="UniProtKB" id="Q9CQ73"/>
    </source>
</evidence>
<evidence type="ECO:0000255" key="3"/>
<evidence type="ECO:0000269" key="4">
    <source>
    </source>
</evidence>
<evidence type="ECO:0000269" key="5">
    <source>
    </source>
</evidence>
<evidence type="ECO:0000269" key="6">
    <source>
    </source>
</evidence>
<evidence type="ECO:0000305" key="7"/>
<evidence type="ECO:0000312" key="8">
    <source>
        <dbReference type="EMBL" id="EDL77846.1"/>
    </source>
</evidence>
<evidence type="ECO:0000312" key="9">
    <source>
        <dbReference type="Proteomes" id="UP000002494"/>
    </source>
</evidence>
<evidence type="ECO:0000312" key="10">
    <source>
        <dbReference type="RGD" id="1306533"/>
    </source>
</evidence>
<evidence type="ECO:0007744" key="11">
    <source>
    </source>
</evidence>
<organism evidence="9">
    <name type="scientific">Rattus norvegicus</name>
    <name type="common">Rat</name>
    <dbReference type="NCBI Taxonomy" id="10116"/>
    <lineage>
        <taxon>Eukaryota</taxon>
        <taxon>Metazoa</taxon>
        <taxon>Chordata</taxon>
        <taxon>Craniata</taxon>
        <taxon>Vertebrata</taxon>
        <taxon>Euteleostomi</taxon>
        <taxon>Mammalia</taxon>
        <taxon>Eutheria</taxon>
        <taxon>Euarchontoglires</taxon>
        <taxon>Glires</taxon>
        <taxon>Rodentia</taxon>
        <taxon>Myomorpha</taxon>
        <taxon>Muroidea</taxon>
        <taxon>Muridae</taxon>
        <taxon>Murinae</taxon>
        <taxon>Rattus</taxon>
    </lineage>
</organism>
<protein>
    <recommendedName>
        <fullName evidence="10">Plakophilin-2</fullName>
    </recommendedName>
</protein>
<dbReference type="EMBL" id="CH473999">
    <property type="protein sequence ID" value="EDL77846.1"/>
    <property type="molecule type" value="Genomic_DNA"/>
</dbReference>
<dbReference type="RefSeq" id="NP_001093969.1">
    <molecule id="F1M7L9-2"/>
    <property type="nucleotide sequence ID" value="NM_001100499.1"/>
</dbReference>
<dbReference type="SMR" id="F1M7L9"/>
<dbReference type="CORUM" id="F1M7L9"/>
<dbReference type="FunCoup" id="F1M7L9">
    <property type="interactions" value="446"/>
</dbReference>
<dbReference type="IntAct" id="F1M7L9">
    <property type="interactions" value="2"/>
</dbReference>
<dbReference type="STRING" id="10116.ENSRNOP00000002498"/>
<dbReference type="iPTMnet" id="F1M7L9"/>
<dbReference type="PhosphoSitePlus" id="F1M7L9"/>
<dbReference type="PeptideAtlas" id="F1M7L9"/>
<dbReference type="Ensembl" id="ENSRNOT00000002498.8">
    <molecule id="F1M7L9-1"/>
    <property type="protein sequence ID" value="ENSRNOP00000002498.7"/>
    <property type="gene ID" value="ENSRNOG00000001825.8"/>
</dbReference>
<dbReference type="Ensembl" id="ENSRNOT00000103562.1">
    <molecule id="F1M7L9-2"/>
    <property type="protein sequence ID" value="ENSRNOP00000088522.1"/>
    <property type="gene ID" value="ENSRNOG00000001825.8"/>
</dbReference>
<dbReference type="GeneID" id="287925"/>
<dbReference type="KEGG" id="rno:287925"/>
<dbReference type="AGR" id="RGD:1306533"/>
<dbReference type="CTD" id="5318"/>
<dbReference type="RGD" id="1306533">
    <property type="gene designation" value="Pkp2"/>
</dbReference>
<dbReference type="VEuPathDB" id="HostDB:ENSRNOG00000001825"/>
<dbReference type="GeneTree" id="ENSGT00940000158677"/>
<dbReference type="HOGENOM" id="CLU_009111_3_0_1"/>
<dbReference type="InParanoid" id="F1M7L9"/>
<dbReference type="OMA" id="MNDSNMF"/>
<dbReference type="OrthoDB" id="33792at9989"/>
<dbReference type="TreeFam" id="TF321877"/>
<dbReference type="Reactome" id="R-RNO-6805567">
    <property type="pathway name" value="Keratinization"/>
</dbReference>
<dbReference type="Reactome" id="R-RNO-6809371">
    <property type="pathway name" value="Formation of the cornified envelope"/>
</dbReference>
<dbReference type="PRO" id="PR:F1M7L9"/>
<dbReference type="Proteomes" id="UP000002494">
    <property type="component" value="Chromosome 11"/>
</dbReference>
<dbReference type="Proteomes" id="UP000234681">
    <property type="component" value="Chromosome 11"/>
</dbReference>
<dbReference type="Bgee" id="ENSRNOG00000001825">
    <property type="expression patterns" value="Expressed in heart and 17 other cell types or tissues"/>
</dbReference>
<dbReference type="GO" id="GO:0005912">
    <property type="term" value="C:adherens junction"/>
    <property type="evidence" value="ECO:0000314"/>
    <property type="project" value="RGD"/>
</dbReference>
<dbReference type="GO" id="GO:0030054">
    <property type="term" value="C:cell junction"/>
    <property type="evidence" value="ECO:0000314"/>
    <property type="project" value="UniProtKB"/>
</dbReference>
<dbReference type="GO" id="GO:0051286">
    <property type="term" value="C:cell tip"/>
    <property type="evidence" value="ECO:0007669"/>
    <property type="project" value="GOC"/>
</dbReference>
<dbReference type="GO" id="GO:0005911">
    <property type="term" value="C:cell-cell junction"/>
    <property type="evidence" value="ECO:0000266"/>
    <property type="project" value="RGD"/>
</dbReference>
<dbReference type="GO" id="GO:0005737">
    <property type="term" value="C:cytoplasm"/>
    <property type="evidence" value="ECO:0000266"/>
    <property type="project" value="RGD"/>
</dbReference>
<dbReference type="GO" id="GO:0030057">
    <property type="term" value="C:desmosome"/>
    <property type="evidence" value="ECO:0000314"/>
    <property type="project" value="UniProtKB"/>
</dbReference>
<dbReference type="GO" id="GO:0014704">
    <property type="term" value="C:intercalated disc"/>
    <property type="evidence" value="ECO:0000314"/>
    <property type="project" value="RGD"/>
</dbReference>
<dbReference type="GO" id="GO:0005882">
    <property type="term" value="C:intermediate filament"/>
    <property type="evidence" value="ECO:0000266"/>
    <property type="project" value="RGD"/>
</dbReference>
<dbReference type="GO" id="GO:0005634">
    <property type="term" value="C:nucleus"/>
    <property type="evidence" value="ECO:0000250"/>
    <property type="project" value="UniProtKB"/>
</dbReference>
<dbReference type="GO" id="GO:0005886">
    <property type="term" value="C:plasma membrane"/>
    <property type="evidence" value="ECO:0000266"/>
    <property type="project" value="RGD"/>
</dbReference>
<dbReference type="GO" id="GO:0045294">
    <property type="term" value="F:alpha-catenin binding"/>
    <property type="evidence" value="ECO:0000266"/>
    <property type="project" value="RGD"/>
</dbReference>
<dbReference type="GO" id="GO:0045296">
    <property type="term" value="F:cadherin binding"/>
    <property type="evidence" value="ECO:0000318"/>
    <property type="project" value="GO_Central"/>
</dbReference>
<dbReference type="GO" id="GO:0003677">
    <property type="term" value="F:DNA binding"/>
    <property type="evidence" value="ECO:0000250"/>
    <property type="project" value="UniProtKB"/>
</dbReference>
<dbReference type="GO" id="GO:0019215">
    <property type="term" value="F:intermediate filament binding"/>
    <property type="evidence" value="ECO:0000266"/>
    <property type="project" value="RGD"/>
</dbReference>
<dbReference type="GO" id="GO:0060090">
    <property type="term" value="F:molecular adaptor activity"/>
    <property type="evidence" value="ECO:0000266"/>
    <property type="project" value="RGD"/>
</dbReference>
<dbReference type="GO" id="GO:0005080">
    <property type="term" value="F:protein kinase C binding"/>
    <property type="evidence" value="ECO:0000266"/>
    <property type="project" value="RGD"/>
</dbReference>
<dbReference type="GO" id="GO:0034334">
    <property type="term" value="P:adherens junction maintenance"/>
    <property type="evidence" value="ECO:0000315"/>
    <property type="project" value="RGD"/>
</dbReference>
<dbReference type="GO" id="GO:0086073">
    <property type="term" value="P:bundle of His cell-Purkinje myocyte adhesion involved in cell communication"/>
    <property type="evidence" value="ECO:0000266"/>
    <property type="project" value="RGD"/>
</dbReference>
<dbReference type="GO" id="GO:0086001">
    <property type="term" value="P:cardiac muscle cell action potential"/>
    <property type="evidence" value="ECO:0000315"/>
    <property type="project" value="RGD"/>
</dbReference>
<dbReference type="GO" id="GO:0086002">
    <property type="term" value="P:cardiac muscle cell action potential involved in contraction"/>
    <property type="evidence" value="ECO:0000266"/>
    <property type="project" value="RGD"/>
</dbReference>
<dbReference type="GO" id="GO:0098609">
    <property type="term" value="P:cell-cell adhesion"/>
    <property type="evidence" value="ECO:0000266"/>
    <property type="project" value="RGD"/>
</dbReference>
<dbReference type="GO" id="GO:0007267">
    <property type="term" value="P:cell-cell signaling"/>
    <property type="evidence" value="ECO:0000266"/>
    <property type="project" value="RGD"/>
</dbReference>
<dbReference type="GO" id="GO:0002159">
    <property type="term" value="P:desmosome assembly"/>
    <property type="evidence" value="ECO:0000266"/>
    <property type="project" value="RGD"/>
</dbReference>
<dbReference type="GO" id="GO:0002934">
    <property type="term" value="P:desmosome organization"/>
    <property type="evidence" value="ECO:0000318"/>
    <property type="project" value="GO_Central"/>
</dbReference>
<dbReference type="GO" id="GO:0016264">
    <property type="term" value="P:gap junction assembly"/>
    <property type="evidence" value="ECO:0000315"/>
    <property type="project" value="RGD"/>
</dbReference>
<dbReference type="GO" id="GO:0007507">
    <property type="term" value="P:heart development"/>
    <property type="evidence" value="ECO:0000266"/>
    <property type="project" value="RGD"/>
</dbReference>
<dbReference type="GO" id="GO:0045110">
    <property type="term" value="P:intermediate filament bundle assembly"/>
    <property type="evidence" value="ECO:0000266"/>
    <property type="project" value="RGD"/>
</dbReference>
<dbReference type="GO" id="GO:0055088">
    <property type="term" value="P:lipid homeostasis"/>
    <property type="evidence" value="ECO:0000315"/>
    <property type="project" value="RGD"/>
</dbReference>
<dbReference type="GO" id="GO:0048496">
    <property type="term" value="P:maintenance of animal organ identity"/>
    <property type="evidence" value="ECO:0000266"/>
    <property type="project" value="RGD"/>
</dbReference>
<dbReference type="GO" id="GO:0099017">
    <property type="term" value="P:maintenance of protein localization at cell tip"/>
    <property type="evidence" value="ECO:0000250"/>
    <property type="project" value="UniProtKB"/>
</dbReference>
<dbReference type="GO" id="GO:0030336">
    <property type="term" value="P:negative regulation of cell migration"/>
    <property type="evidence" value="ECO:0000315"/>
    <property type="project" value="RGD"/>
</dbReference>
<dbReference type="GO" id="GO:0008285">
    <property type="term" value="P:negative regulation of cell population proliferation"/>
    <property type="evidence" value="ECO:0000315"/>
    <property type="project" value="RGD"/>
</dbReference>
<dbReference type="GO" id="GO:0045785">
    <property type="term" value="P:positive regulation of cell adhesion"/>
    <property type="evidence" value="ECO:0000315"/>
    <property type="project" value="UniProtKB"/>
</dbReference>
<dbReference type="GO" id="GO:0072659">
    <property type="term" value="P:protein localization to plasma membrane"/>
    <property type="evidence" value="ECO:0000266"/>
    <property type="project" value="RGD"/>
</dbReference>
<dbReference type="GO" id="GO:2000810">
    <property type="term" value="P:regulation of bicellular tight junction assembly"/>
    <property type="evidence" value="ECO:0000315"/>
    <property type="project" value="RGD"/>
</dbReference>
<dbReference type="GO" id="GO:0010810">
    <property type="term" value="P:regulation of cell-substrate adhesion"/>
    <property type="evidence" value="ECO:0000266"/>
    <property type="project" value="RGD"/>
</dbReference>
<dbReference type="GO" id="GO:0086091">
    <property type="term" value="P:regulation of heart rate by cardiac conduction"/>
    <property type="evidence" value="ECO:0000266"/>
    <property type="project" value="RGD"/>
</dbReference>
<dbReference type="GO" id="GO:1900024">
    <property type="term" value="P:regulation of substrate adhesion-dependent cell spreading"/>
    <property type="evidence" value="ECO:0000266"/>
    <property type="project" value="RGD"/>
</dbReference>
<dbReference type="GO" id="GO:0098911">
    <property type="term" value="P:regulation of ventricular cardiac muscle cell action potential"/>
    <property type="evidence" value="ECO:0000266"/>
    <property type="project" value="RGD"/>
</dbReference>
<dbReference type="GO" id="GO:0086005">
    <property type="term" value="P:ventricular cardiac muscle cell action potential"/>
    <property type="evidence" value="ECO:0000266"/>
    <property type="project" value="RGD"/>
</dbReference>
<dbReference type="GO" id="GO:0055010">
    <property type="term" value="P:ventricular cardiac muscle tissue morphogenesis"/>
    <property type="evidence" value="ECO:0000266"/>
    <property type="project" value="RGD"/>
</dbReference>
<dbReference type="FunFam" id="1.25.10.10:FF:000159">
    <property type="entry name" value="Plakophilin 2"/>
    <property type="match status" value="1"/>
</dbReference>
<dbReference type="Gene3D" id="1.25.10.10">
    <property type="entry name" value="Leucine-rich Repeat Variant"/>
    <property type="match status" value="1"/>
</dbReference>
<dbReference type="InterPro" id="IPR011989">
    <property type="entry name" value="ARM-like"/>
</dbReference>
<dbReference type="InterPro" id="IPR016024">
    <property type="entry name" value="ARM-type_fold"/>
</dbReference>
<dbReference type="InterPro" id="IPR000225">
    <property type="entry name" value="Armadillo"/>
</dbReference>
<dbReference type="InterPro" id="IPR028435">
    <property type="entry name" value="Plakophilin/d_Catenin"/>
</dbReference>
<dbReference type="PANTHER" id="PTHR10372:SF25">
    <property type="entry name" value="PLAKOPHILIN-2"/>
    <property type="match status" value="1"/>
</dbReference>
<dbReference type="PANTHER" id="PTHR10372">
    <property type="entry name" value="PLAKOPHILLIN-RELATED"/>
    <property type="match status" value="1"/>
</dbReference>
<dbReference type="Pfam" id="PF00514">
    <property type="entry name" value="Arm"/>
    <property type="match status" value="1"/>
</dbReference>
<dbReference type="SMART" id="SM00185">
    <property type="entry name" value="ARM"/>
    <property type="match status" value="4"/>
</dbReference>
<dbReference type="SUPFAM" id="SSF48371">
    <property type="entry name" value="ARM repeat"/>
    <property type="match status" value="1"/>
</dbReference>
<dbReference type="PROSITE" id="PS50176">
    <property type="entry name" value="ARM_REPEAT"/>
    <property type="match status" value="1"/>
</dbReference>
<name>PKP2_RAT</name>
<reference evidence="9" key="1">
    <citation type="journal article" date="2004" name="Nature">
        <title>Genome sequence of the Brown Norway rat yields insights into mammalian evolution.</title>
        <authorList>
            <person name="Gibbs R.A."/>
            <person name="Weinstock G.M."/>
            <person name="Metzker M.L."/>
            <person name="Muzny D.M."/>
            <person name="Sodergren E.J."/>
            <person name="Scherer S."/>
            <person name="Scott G."/>
            <person name="Steffen D."/>
            <person name="Worley K.C."/>
            <person name="Burch P.E."/>
            <person name="Okwuonu G."/>
            <person name="Hines S."/>
            <person name="Lewis L."/>
            <person name="Deramo C."/>
            <person name="Delgado O."/>
            <person name="Dugan-Rocha S."/>
            <person name="Miner G."/>
            <person name="Morgan M."/>
            <person name="Hawes A."/>
            <person name="Gill R."/>
            <person name="Holt R.A."/>
            <person name="Adams M.D."/>
            <person name="Amanatides P.G."/>
            <person name="Baden-Tillson H."/>
            <person name="Barnstead M."/>
            <person name="Chin S."/>
            <person name="Evans C.A."/>
            <person name="Ferriera S."/>
            <person name="Fosler C."/>
            <person name="Glodek A."/>
            <person name="Gu Z."/>
            <person name="Jennings D."/>
            <person name="Kraft C.L."/>
            <person name="Nguyen T."/>
            <person name="Pfannkoch C.M."/>
            <person name="Sitter C."/>
            <person name="Sutton G.G."/>
            <person name="Venter J.C."/>
            <person name="Woodage T."/>
            <person name="Smith D."/>
            <person name="Lee H.-M."/>
            <person name="Gustafson E."/>
            <person name="Cahill P."/>
            <person name="Kana A."/>
            <person name="Doucette-Stamm L."/>
            <person name="Weinstock K."/>
            <person name="Fechtel K."/>
            <person name="Weiss R.B."/>
            <person name="Dunn D.M."/>
            <person name="Green E.D."/>
            <person name="Blakesley R.W."/>
            <person name="Bouffard G.G."/>
            <person name="De Jong P.J."/>
            <person name="Osoegawa K."/>
            <person name="Zhu B."/>
            <person name="Marra M."/>
            <person name="Schein J."/>
            <person name="Bosdet I."/>
            <person name="Fjell C."/>
            <person name="Jones S."/>
            <person name="Krzywinski M."/>
            <person name="Mathewson C."/>
            <person name="Siddiqui A."/>
            <person name="Wye N."/>
            <person name="McPherson J."/>
            <person name="Zhao S."/>
            <person name="Fraser C.M."/>
            <person name="Shetty J."/>
            <person name="Shatsman S."/>
            <person name="Geer K."/>
            <person name="Chen Y."/>
            <person name="Abramzon S."/>
            <person name="Nierman W.C."/>
            <person name="Havlak P.H."/>
            <person name="Chen R."/>
            <person name="Durbin K.J."/>
            <person name="Egan A."/>
            <person name="Ren Y."/>
            <person name="Song X.-Z."/>
            <person name="Li B."/>
            <person name="Liu Y."/>
            <person name="Qin X."/>
            <person name="Cawley S."/>
            <person name="Cooney A.J."/>
            <person name="D'Souza L.M."/>
            <person name="Martin K."/>
            <person name="Wu J.Q."/>
            <person name="Gonzalez-Garay M.L."/>
            <person name="Jackson A.R."/>
            <person name="Kalafus K.J."/>
            <person name="McLeod M.P."/>
            <person name="Milosavljevic A."/>
            <person name="Virk D."/>
            <person name="Volkov A."/>
            <person name="Wheeler D.A."/>
            <person name="Zhang Z."/>
            <person name="Bailey J.A."/>
            <person name="Eichler E.E."/>
            <person name="Tuzun E."/>
            <person name="Birney E."/>
            <person name="Mongin E."/>
            <person name="Ureta-Vidal A."/>
            <person name="Woodwark C."/>
            <person name="Zdobnov E."/>
            <person name="Bork P."/>
            <person name="Suyama M."/>
            <person name="Torrents D."/>
            <person name="Alexandersson M."/>
            <person name="Trask B.J."/>
            <person name="Young J.M."/>
            <person name="Huang H."/>
            <person name="Wang H."/>
            <person name="Xing H."/>
            <person name="Daniels S."/>
            <person name="Gietzen D."/>
            <person name="Schmidt J."/>
            <person name="Stevens K."/>
            <person name="Vitt U."/>
            <person name="Wingrove J."/>
            <person name="Camara F."/>
            <person name="Mar Alba M."/>
            <person name="Abril J.F."/>
            <person name="Guigo R."/>
            <person name="Smit A."/>
            <person name="Dubchak I."/>
            <person name="Rubin E.M."/>
            <person name="Couronne O."/>
            <person name="Poliakov A."/>
            <person name="Huebner N."/>
            <person name="Ganten D."/>
            <person name="Goesele C."/>
            <person name="Hummel O."/>
            <person name="Kreitler T."/>
            <person name="Lee Y.-A."/>
            <person name="Monti J."/>
            <person name="Schulz H."/>
            <person name="Zimdahl H."/>
            <person name="Himmelbauer H."/>
            <person name="Lehrach H."/>
            <person name="Jacob H.J."/>
            <person name="Bromberg S."/>
            <person name="Gullings-Handley J."/>
            <person name="Jensen-Seaman M.I."/>
            <person name="Kwitek A.E."/>
            <person name="Lazar J."/>
            <person name="Pasko D."/>
            <person name="Tonellato P.J."/>
            <person name="Twigger S."/>
            <person name="Ponting C.P."/>
            <person name="Duarte J.M."/>
            <person name="Rice S."/>
            <person name="Goodstadt L."/>
            <person name="Beatson S.A."/>
            <person name="Emes R.D."/>
            <person name="Winter E.E."/>
            <person name="Webber C."/>
            <person name="Brandt P."/>
            <person name="Nyakatura G."/>
            <person name="Adetobi M."/>
            <person name="Chiaromonte F."/>
            <person name="Elnitski L."/>
            <person name="Eswara P."/>
            <person name="Hardison R.C."/>
            <person name="Hou M."/>
            <person name="Kolbe D."/>
            <person name="Makova K."/>
            <person name="Miller W."/>
            <person name="Nekrutenko A."/>
            <person name="Riemer C."/>
            <person name="Schwartz S."/>
            <person name="Taylor J."/>
            <person name="Yang S."/>
            <person name="Zhang Y."/>
            <person name="Lindpaintner K."/>
            <person name="Andrews T.D."/>
            <person name="Caccamo M."/>
            <person name="Clamp M."/>
            <person name="Clarke L."/>
            <person name="Curwen V."/>
            <person name="Durbin R.M."/>
            <person name="Eyras E."/>
            <person name="Searle S.M."/>
            <person name="Cooper G.M."/>
            <person name="Batzoglou S."/>
            <person name="Brudno M."/>
            <person name="Sidow A."/>
            <person name="Stone E.A."/>
            <person name="Payseur B.A."/>
            <person name="Bourque G."/>
            <person name="Lopez-Otin C."/>
            <person name="Puente X.S."/>
            <person name="Chakrabarti K."/>
            <person name="Chatterji S."/>
            <person name="Dewey C."/>
            <person name="Pachter L."/>
            <person name="Bray N."/>
            <person name="Yap V.B."/>
            <person name="Caspi A."/>
            <person name="Tesler G."/>
            <person name="Pevzner P.A."/>
            <person name="Haussler D."/>
            <person name="Roskin K.M."/>
            <person name="Baertsch R."/>
            <person name="Clawson H."/>
            <person name="Furey T.S."/>
            <person name="Hinrichs A.S."/>
            <person name="Karolchik D."/>
            <person name="Kent W.J."/>
            <person name="Rosenbloom K.R."/>
            <person name="Trumbower H."/>
            <person name="Weirauch M."/>
            <person name="Cooper D.N."/>
            <person name="Stenson P.D."/>
            <person name="Ma B."/>
            <person name="Brent M."/>
            <person name="Arumugam M."/>
            <person name="Shteynberg D."/>
            <person name="Copley R.R."/>
            <person name="Taylor M.S."/>
            <person name="Riethman H."/>
            <person name="Mudunuri U."/>
            <person name="Peterson J."/>
            <person name="Guyer M."/>
            <person name="Felsenfeld A."/>
            <person name="Old S."/>
            <person name="Mockrin S."/>
            <person name="Collins F.S."/>
        </authorList>
    </citation>
    <scope>NUCLEOTIDE SEQUENCE [LARGE SCALE GENOMIC DNA]</scope>
    <source>
        <strain evidence="9">Brown Norway</strain>
    </source>
</reference>
<reference evidence="8" key="2">
    <citation type="submission" date="2005-09" db="EMBL/GenBank/DDBJ databases">
        <authorList>
            <person name="Mural R.J."/>
            <person name="Li P.W."/>
            <person name="Adams M.D."/>
            <person name="Amanatides P.G."/>
            <person name="Baden-Tillson H."/>
            <person name="Barnstead M."/>
            <person name="Chin S.H."/>
            <person name="Dew I."/>
            <person name="Evans C.A."/>
            <person name="Ferriera S."/>
            <person name="Flanigan M."/>
            <person name="Fosler C."/>
            <person name="Glodek A."/>
            <person name="Gu Z."/>
            <person name="Holt R.A."/>
            <person name="Jennings D."/>
            <person name="Kraft C.L."/>
            <person name="Lu F."/>
            <person name="Nguyen T."/>
            <person name="Nusskern D.R."/>
            <person name="Pfannkoch C.M."/>
            <person name="Sitter C."/>
            <person name="Sutton G.G."/>
            <person name="Venter J.C."/>
            <person name="Wang Z."/>
            <person name="Woodage T."/>
            <person name="Zheng X.H."/>
            <person name="Zhong F."/>
        </authorList>
    </citation>
    <scope>NUCLEOTIDE SEQUENCE [LARGE SCALE GENOMIC DNA]</scope>
    <source>
        <strain evidence="8">Brown Norway</strain>
    </source>
</reference>
<reference evidence="7" key="3">
    <citation type="journal article" date="2009" name="Circ. Res.">
        <title>Loss of plakophilin-2 expression leads to decreased sodium current and slower conduction velocity in cultured cardiac myocytes.</title>
        <authorList>
            <person name="Sato P.Y."/>
            <person name="Musa H."/>
            <person name="Coombs W."/>
            <person name="Guerrero-Serna G."/>
            <person name="Patino G.A."/>
            <person name="Taffet S.M."/>
            <person name="Isom L.L."/>
            <person name="Delmar M."/>
        </authorList>
    </citation>
    <scope>FUNCTION</scope>
    <scope>INTERACTION WITH SCN5A</scope>
    <scope>SUBCELLULAR LOCATION</scope>
    <scope>TISSUE SPECIFICITY</scope>
</reference>
<reference key="4">
    <citation type="journal article" date="2011" name="Circ. Res.">
        <title>Interactions between ankyrin-G, Plakophilin-2, and Connexin43 at the cardiac intercalated disc.</title>
        <authorList>
            <person name="Sato P.Y."/>
            <person name="Coombs W."/>
            <person name="Lin X."/>
            <person name="Nekrasova O."/>
            <person name="Green K.J."/>
            <person name="Isom L.L."/>
            <person name="Taffet S.M."/>
            <person name="Delmar M."/>
        </authorList>
    </citation>
    <scope>FUNCTION</scope>
    <scope>INTERACTION WITH ANK3 AND GJA1</scope>
    <scope>SUBCELLULAR LOCATION</scope>
    <scope>TISSUE SPECIFICITY</scope>
</reference>
<reference evidence="11" key="5">
    <citation type="journal article" date="2012" name="Nat. Commun.">
        <title>Quantitative maps of protein phosphorylation sites across 14 different rat organs and tissues.</title>
        <authorList>
            <person name="Lundby A."/>
            <person name="Secher A."/>
            <person name="Lage K."/>
            <person name="Nordsborg N.B."/>
            <person name="Dmytriyev A."/>
            <person name="Lundby C."/>
            <person name="Olsen J.V."/>
        </authorList>
    </citation>
    <scope>IDENTIFICATION BY MASS SPECTROMETRY [LARGE SCALE ANALYSIS]</scope>
</reference>
<reference evidence="7" key="6">
    <citation type="journal article" date="2016" name="J. Cell Biol.">
        <title>Plakophilin-2 loss promotes TGF-beta1/p38 MAPK-dependent fibrotic gene expression in cardiomyocytes.</title>
        <authorList>
            <person name="Dubash A.D."/>
            <person name="Kam C.Y."/>
            <person name="Aguado B.A."/>
            <person name="Patel D.M."/>
            <person name="Delmar M."/>
            <person name="Shea L.D."/>
            <person name="Green K.J."/>
        </authorList>
    </citation>
    <scope>FUNCTION</scope>
    <scope>SUBCELLULAR LOCATION</scope>
</reference>
<keyword id="KW-0025">Alternative splicing</keyword>
<keyword id="KW-0130">Cell adhesion</keyword>
<keyword id="KW-0965">Cell junction</keyword>
<keyword id="KW-0963">Cytoplasm</keyword>
<keyword id="KW-0238">DNA-binding</keyword>
<keyword id="KW-0488">Methylation</keyword>
<keyword id="KW-0539">Nucleus</keyword>
<keyword id="KW-0597">Phosphoprotein</keyword>
<keyword id="KW-1185">Reference proteome</keyword>
<keyword id="KW-0677">Repeat</keyword>